<reference key="1">
    <citation type="journal article" date="2005" name="Nature">
        <title>Sequencing of Aspergillus nidulans and comparative analysis with A. fumigatus and A. oryzae.</title>
        <authorList>
            <person name="Galagan J.E."/>
            <person name="Calvo S.E."/>
            <person name="Cuomo C."/>
            <person name="Ma L.-J."/>
            <person name="Wortman J.R."/>
            <person name="Batzoglou S."/>
            <person name="Lee S.-I."/>
            <person name="Bastuerkmen M."/>
            <person name="Spevak C.C."/>
            <person name="Clutterbuck J."/>
            <person name="Kapitonov V."/>
            <person name="Jurka J."/>
            <person name="Scazzocchio C."/>
            <person name="Farman M.L."/>
            <person name="Butler J."/>
            <person name="Purcell S."/>
            <person name="Harris S."/>
            <person name="Braus G.H."/>
            <person name="Draht O."/>
            <person name="Busch S."/>
            <person name="D'Enfert C."/>
            <person name="Bouchier C."/>
            <person name="Goldman G.H."/>
            <person name="Bell-Pedersen D."/>
            <person name="Griffiths-Jones S."/>
            <person name="Doonan J.H."/>
            <person name="Yu J."/>
            <person name="Vienken K."/>
            <person name="Pain A."/>
            <person name="Freitag M."/>
            <person name="Selker E.U."/>
            <person name="Archer D.B."/>
            <person name="Penalva M.A."/>
            <person name="Oakley B.R."/>
            <person name="Momany M."/>
            <person name="Tanaka T."/>
            <person name="Kumagai T."/>
            <person name="Asai K."/>
            <person name="Machida M."/>
            <person name="Nierman W.C."/>
            <person name="Denning D.W."/>
            <person name="Caddick M.X."/>
            <person name="Hynes M."/>
            <person name="Paoletti M."/>
            <person name="Fischer R."/>
            <person name="Miller B.L."/>
            <person name="Dyer P.S."/>
            <person name="Sachs M.S."/>
            <person name="Osmani S.A."/>
            <person name="Birren B.W."/>
        </authorList>
    </citation>
    <scope>NUCLEOTIDE SEQUENCE [LARGE SCALE GENOMIC DNA]</scope>
    <source>
        <strain>FGSC A4 / ATCC 38163 / CBS 112.46 / NRRL 194 / M139</strain>
    </source>
</reference>
<reference key="2">
    <citation type="journal article" date="2009" name="Fungal Genet. Biol.">
        <title>The 2008 update of the Aspergillus nidulans genome annotation: a community effort.</title>
        <authorList>
            <person name="Wortman J.R."/>
            <person name="Gilsenan J.M."/>
            <person name="Joardar V."/>
            <person name="Deegan J."/>
            <person name="Clutterbuck J."/>
            <person name="Andersen M.R."/>
            <person name="Archer D."/>
            <person name="Bencina M."/>
            <person name="Braus G."/>
            <person name="Coutinho P."/>
            <person name="von Dohren H."/>
            <person name="Doonan J."/>
            <person name="Driessen A.J."/>
            <person name="Durek P."/>
            <person name="Espeso E."/>
            <person name="Fekete E."/>
            <person name="Flipphi M."/>
            <person name="Estrada C.G."/>
            <person name="Geysens S."/>
            <person name="Goldman G."/>
            <person name="de Groot P.W."/>
            <person name="Hansen K."/>
            <person name="Harris S.D."/>
            <person name="Heinekamp T."/>
            <person name="Helmstaedt K."/>
            <person name="Henrissat B."/>
            <person name="Hofmann G."/>
            <person name="Homan T."/>
            <person name="Horio T."/>
            <person name="Horiuchi H."/>
            <person name="James S."/>
            <person name="Jones M."/>
            <person name="Karaffa L."/>
            <person name="Karanyi Z."/>
            <person name="Kato M."/>
            <person name="Keller N."/>
            <person name="Kelly D.E."/>
            <person name="Kiel J.A."/>
            <person name="Kim J.M."/>
            <person name="van der Klei I.J."/>
            <person name="Klis F.M."/>
            <person name="Kovalchuk A."/>
            <person name="Krasevec N."/>
            <person name="Kubicek C.P."/>
            <person name="Liu B."/>
            <person name="Maccabe A."/>
            <person name="Meyer V."/>
            <person name="Mirabito P."/>
            <person name="Miskei M."/>
            <person name="Mos M."/>
            <person name="Mullins J."/>
            <person name="Nelson D.R."/>
            <person name="Nielsen J."/>
            <person name="Oakley B.R."/>
            <person name="Osmani S.A."/>
            <person name="Pakula T."/>
            <person name="Paszewski A."/>
            <person name="Paulsen I."/>
            <person name="Pilsyk S."/>
            <person name="Pocsi I."/>
            <person name="Punt P.J."/>
            <person name="Ram A.F."/>
            <person name="Ren Q."/>
            <person name="Robellet X."/>
            <person name="Robson G."/>
            <person name="Seiboth B."/>
            <person name="van Solingen P."/>
            <person name="Specht T."/>
            <person name="Sun J."/>
            <person name="Taheri-Talesh N."/>
            <person name="Takeshita N."/>
            <person name="Ussery D."/>
            <person name="vanKuyk P.A."/>
            <person name="Visser H."/>
            <person name="van de Vondervoort P.J."/>
            <person name="de Vries R.P."/>
            <person name="Walton J."/>
            <person name="Xiang X."/>
            <person name="Xiong Y."/>
            <person name="Zeng A.P."/>
            <person name="Brandt B.W."/>
            <person name="Cornell M.J."/>
            <person name="van den Hondel C.A."/>
            <person name="Visser J."/>
            <person name="Oliver S.G."/>
            <person name="Turner G."/>
        </authorList>
    </citation>
    <scope>GENOME REANNOTATION</scope>
    <source>
        <strain>FGSC A4 / ATCC 38163 / CBS 112.46 / NRRL 194 / M139</strain>
    </source>
</reference>
<sequence length="115" mass="12642">MSESNQATFQGNDPAAHAPDAAAYDKGKGKAVEDMDVSMDEEEEESEESDAEIMVEDEDDDGDSNLEPVSTENIISGGRRTRGKTIDYQEAANKIDADEMDDEEDDDEDFKPSDK</sequence>
<organism>
    <name type="scientific">Emericella nidulans (strain FGSC A4 / ATCC 38163 / CBS 112.46 / NRRL 194 / M139)</name>
    <name type="common">Aspergillus nidulans</name>
    <dbReference type="NCBI Taxonomy" id="227321"/>
    <lineage>
        <taxon>Eukaryota</taxon>
        <taxon>Fungi</taxon>
        <taxon>Dikarya</taxon>
        <taxon>Ascomycota</taxon>
        <taxon>Pezizomycotina</taxon>
        <taxon>Eurotiomycetes</taxon>
        <taxon>Eurotiomycetidae</taxon>
        <taxon>Eurotiales</taxon>
        <taxon>Aspergillaceae</taxon>
        <taxon>Aspergillus</taxon>
        <taxon>Aspergillus subgen. Nidulantes</taxon>
    </lineage>
</organism>
<gene>
    <name type="primary">chz1</name>
    <name type="ORF">AN5128</name>
</gene>
<feature type="chain" id="PRO_0000330210" description="Histone H2A.Z-specific chaperone chz1">
    <location>
        <begin position="1"/>
        <end position="115"/>
    </location>
</feature>
<feature type="region of interest" description="Disordered" evidence="2">
    <location>
        <begin position="1"/>
        <end position="115"/>
    </location>
</feature>
<feature type="compositionally biased region" description="Polar residues" evidence="2">
    <location>
        <begin position="1"/>
        <end position="11"/>
    </location>
</feature>
<feature type="compositionally biased region" description="Low complexity" evidence="2">
    <location>
        <begin position="13"/>
        <end position="22"/>
    </location>
</feature>
<feature type="compositionally biased region" description="Basic and acidic residues" evidence="2">
    <location>
        <begin position="23"/>
        <end position="33"/>
    </location>
</feature>
<feature type="compositionally biased region" description="Acidic residues" evidence="2">
    <location>
        <begin position="34"/>
        <end position="64"/>
    </location>
</feature>
<feature type="compositionally biased region" description="Acidic residues" evidence="2">
    <location>
        <begin position="98"/>
        <end position="109"/>
    </location>
</feature>
<keyword id="KW-0143">Chaperone</keyword>
<keyword id="KW-0539">Nucleus</keyword>
<keyword id="KW-1185">Reference proteome</keyword>
<name>CHZ1_EMENI</name>
<protein>
    <recommendedName>
        <fullName>Histone H2A.Z-specific chaperone chz1</fullName>
    </recommendedName>
</protein>
<comment type="function">
    <text evidence="1">Forms a chaperone-bound H2A.Z-H2B complex that acts as a source for SWR1 complex-dependent H2A to H2A.Z histone replacement in chromatin.</text>
</comment>
<comment type="subunit">
    <text evidence="1">Forms a heterotrimer with H2A.Z-H2B, stabilizing the association of the histone dimer. Also, with a lower affinity, forms a heterotrimer with H2A-H2B (By similarity).</text>
</comment>
<comment type="subcellular location">
    <subcellularLocation>
        <location evidence="1">Nucleus</location>
    </subcellularLocation>
</comment>
<comment type="similarity">
    <text evidence="3">Belongs to the CHZ1 family.</text>
</comment>
<dbReference type="EMBL" id="AACD01000088">
    <property type="protein sequence ID" value="EAA62309.1"/>
    <property type="molecule type" value="Genomic_DNA"/>
</dbReference>
<dbReference type="EMBL" id="BN001305">
    <property type="protein sequence ID" value="CBF80912.1"/>
    <property type="molecule type" value="Genomic_DNA"/>
</dbReference>
<dbReference type="RefSeq" id="XP_662732.1">
    <property type="nucleotide sequence ID" value="XM_657640.1"/>
</dbReference>
<dbReference type="SMR" id="Q5B2V2"/>
<dbReference type="STRING" id="227321.Q5B2V2"/>
<dbReference type="EnsemblFungi" id="CBF80912">
    <property type="protein sequence ID" value="CBF80912"/>
    <property type="gene ID" value="ANIA_05128"/>
</dbReference>
<dbReference type="KEGG" id="ani:ANIA_05128"/>
<dbReference type="VEuPathDB" id="FungiDB:AN5128"/>
<dbReference type="eggNOG" id="ENOG502SCUM">
    <property type="taxonomic scope" value="Eukaryota"/>
</dbReference>
<dbReference type="HOGENOM" id="CLU_130004_1_1_1"/>
<dbReference type="InParanoid" id="Q5B2V2"/>
<dbReference type="OMA" id="MEGVQDP"/>
<dbReference type="OrthoDB" id="4174291at2759"/>
<dbReference type="Proteomes" id="UP000000560">
    <property type="component" value="Chromosome V"/>
</dbReference>
<dbReference type="GO" id="GO:0005634">
    <property type="term" value="C:nucleus"/>
    <property type="evidence" value="ECO:0007669"/>
    <property type="project" value="UniProtKB-SubCell"/>
</dbReference>
<dbReference type="InterPro" id="IPR019098">
    <property type="entry name" value="Histone_chaperone_domain_CHZ"/>
</dbReference>
<dbReference type="Pfam" id="PF09649">
    <property type="entry name" value="CHZ"/>
    <property type="match status" value="1"/>
</dbReference>
<dbReference type="SMART" id="SM01082">
    <property type="entry name" value="CHZ"/>
    <property type="match status" value="1"/>
</dbReference>
<evidence type="ECO:0000250" key="1"/>
<evidence type="ECO:0000256" key="2">
    <source>
        <dbReference type="SAM" id="MobiDB-lite"/>
    </source>
</evidence>
<evidence type="ECO:0000305" key="3"/>
<proteinExistence type="inferred from homology"/>
<accession>Q5B2V2</accession>
<accession>C8VEZ0</accession>